<comment type="function">
    <text evidence="1">Component of the spindle pole body (SPB) required for insertion of the nascent SPB into the nuclear envelope and for the proper execution of spindle pole body (SPB) duplication.</text>
</comment>
<comment type="subunit">
    <text evidence="1">Interacts with BBP1, MPS3, and SPC24.</text>
</comment>
<comment type="subcellular location">
    <subcellularLocation>
        <location evidence="1">Nucleus membrane</location>
        <topology evidence="1">Single-pass membrane protein</topology>
    </subcellularLocation>
    <subcellularLocation>
        <location evidence="1">Cytoplasm</location>
        <location evidence="1">Cytoskeleton</location>
        <location evidence="1">Microtubule organizing center</location>
        <location evidence="1">Spindle pole body</location>
    </subcellularLocation>
</comment>
<comment type="similarity">
    <text evidence="4">Belongs to the MPS2 family.</text>
</comment>
<gene>
    <name type="primary">MPS2</name>
    <name type="synonym">MMC1</name>
    <name type="ORF">C1Q_04711</name>
</gene>
<proteinExistence type="inferred from homology"/>
<dbReference type="EMBL" id="ACFL01000369">
    <property type="protein sequence ID" value="EEU04995.1"/>
    <property type="molecule type" value="Genomic_DNA"/>
</dbReference>
<dbReference type="SMR" id="C7GW39"/>
<dbReference type="Proteomes" id="UP000008073">
    <property type="component" value="Unassembled WGS sequence"/>
</dbReference>
<dbReference type="GO" id="GO:0005737">
    <property type="term" value="C:cytoplasm"/>
    <property type="evidence" value="ECO:0007669"/>
    <property type="project" value="UniProtKB-KW"/>
</dbReference>
<dbReference type="GO" id="GO:0031965">
    <property type="term" value="C:nuclear membrane"/>
    <property type="evidence" value="ECO:0007669"/>
    <property type="project" value="UniProtKB-SubCell"/>
</dbReference>
<dbReference type="GO" id="GO:0005816">
    <property type="term" value="C:spindle pole body"/>
    <property type="evidence" value="ECO:0007669"/>
    <property type="project" value="UniProtKB-SubCell"/>
</dbReference>
<dbReference type="GO" id="GO:0071988">
    <property type="term" value="P:protein localization to spindle pole body"/>
    <property type="evidence" value="ECO:0007669"/>
    <property type="project" value="InterPro"/>
</dbReference>
<dbReference type="GO" id="GO:0030474">
    <property type="term" value="P:spindle pole body duplication"/>
    <property type="evidence" value="ECO:0007669"/>
    <property type="project" value="InterPro"/>
</dbReference>
<dbReference type="InterPro" id="IPR031433">
    <property type="entry name" value="Mps2"/>
</dbReference>
<dbReference type="Pfam" id="PF17060">
    <property type="entry name" value="MPS2"/>
    <property type="match status" value="1"/>
</dbReference>
<accession>C7GW39</accession>
<sequence length="387" mass="44558">MSNGAFDAIFEYAWGQIDKPISGDFIYGKDLPKLIEIIENIFQKAQKSGSYELRLPLFSEINKDLFRTFSNTKTFFKIHKEEFDDIFFNLVNHPLREILENAFIGVDSIPSDFIVSMNLNSPSKFLVENKSKNTEGAGISTPRKKLTESPIKLLSRNNIGKALEVQVEELKRELTAKQSLLQENERQVSELKIRLETYQEKYASIQQRFSDLQKARQVEDNQNSSRTSDPGSPLVTGIDQKAILEEFRRRLQRQTDTISFLKDQIRRERGLNCSNDKVSHSKRKHATTDGDGTFKNFISAVPSNIWVKATIRIIVCFALLAGVLPYIRKYVYAHDTPSQNSRLQLSWWENSGILSKIVWFFEDQTDLETEYRSNANVDDAYSRVFGI</sequence>
<evidence type="ECO:0000250" key="1"/>
<evidence type="ECO:0000255" key="2"/>
<evidence type="ECO:0000256" key="3">
    <source>
        <dbReference type="SAM" id="MobiDB-lite"/>
    </source>
</evidence>
<evidence type="ECO:0000305" key="4"/>
<keyword id="KW-0175">Coiled coil</keyword>
<keyword id="KW-0963">Cytoplasm</keyword>
<keyword id="KW-0206">Cytoskeleton</keyword>
<keyword id="KW-0472">Membrane</keyword>
<keyword id="KW-0539">Nucleus</keyword>
<keyword id="KW-0812">Transmembrane</keyword>
<keyword id="KW-1133">Transmembrane helix</keyword>
<protein>
    <recommendedName>
        <fullName>Monopolar spindle protein 2</fullName>
    </recommendedName>
</protein>
<organism>
    <name type="scientific">Saccharomyces cerevisiae (strain JAY291)</name>
    <name type="common">Baker's yeast</name>
    <dbReference type="NCBI Taxonomy" id="574961"/>
    <lineage>
        <taxon>Eukaryota</taxon>
        <taxon>Fungi</taxon>
        <taxon>Dikarya</taxon>
        <taxon>Ascomycota</taxon>
        <taxon>Saccharomycotina</taxon>
        <taxon>Saccharomycetes</taxon>
        <taxon>Saccharomycetales</taxon>
        <taxon>Saccharomycetaceae</taxon>
        <taxon>Saccharomyces</taxon>
    </lineage>
</organism>
<name>MPS2_YEAS2</name>
<reference key="1">
    <citation type="journal article" date="2009" name="Genome Res.">
        <title>Genome structure of a Saccharomyces cerevisiae strain widely used in bioethanol production.</title>
        <authorList>
            <person name="Argueso J.L."/>
            <person name="Carazzolle M.F."/>
            <person name="Mieczkowski P.A."/>
            <person name="Duarte F.M."/>
            <person name="Netto O.V.C."/>
            <person name="Missawa S.K."/>
            <person name="Galzerani F."/>
            <person name="Costa G.G.L."/>
            <person name="Vidal R.O."/>
            <person name="Noronha M.F."/>
            <person name="Dominska M."/>
            <person name="Andrietta M.G.S."/>
            <person name="Andrietta S.R."/>
            <person name="Cunha A.F."/>
            <person name="Gomes L.H."/>
            <person name="Tavares F.C.A."/>
            <person name="Alcarde A.R."/>
            <person name="Dietrich F.S."/>
            <person name="McCusker J.H."/>
            <person name="Petes T.D."/>
            <person name="Pereira G.A.G."/>
        </authorList>
    </citation>
    <scope>NUCLEOTIDE SEQUENCE [LARGE SCALE GENOMIC DNA]</scope>
    <source>
        <strain>JAY291</strain>
    </source>
</reference>
<feature type="chain" id="PRO_0000409160" description="Monopolar spindle protein 2">
    <location>
        <begin position="1"/>
        <end position="387"/>
    </location>
</feature>
<feature type="transmembrane region" description="Helical" evidence="2">
    <location>
        <begin position="311"/>
        <end position="327"/>
    </location>
</feature>
<feature type="region of interest" description="Disordered" evidence="3">
    <location>
        <begin position="216"/>
        <end position="235"/>
    </location>
</feature>
<feature type="coiled-coil region" evidence="2">
    <location>
        <begin position="157"/>
        <end position="269"/>
    </location>
</feature>
<feature type="compositionally biased region" description="Polar residues" evidence="3">
    <location>
        <begin position="220"/>
        <end position="230"/>
    </location>
</feature>